<feature type="chain" id="PRO_0000072489" description="Testis-expressed protein 10 homolog">
    <location>
        <begin position="1"/>
        <end position="933"/>
    </location>
</feature>
<feature type="repeat" description="HEAT">
    <location>
        <begin position="99"/>
        <end position="137"/>
    </location>
</feature>
<feature type="region of interest" description="Disordered" evidence="3">
    <location>
        <begin position="1"/>
        <end position="29"/>
    </location>
</feature>
<feature type="compositionally biased region" description="Basic residues" evidence="3">
    <location>
        <begin position="14"/>
        <end position="23"/>
    </location>
</feature>
<feature type="sequence conflict" description="In Ref. 2; AAH44417." evidence="4" ref="2">
    <original>N</original>
    <variation>Y</variation>
    <location>
        <position position="388"/>
    </location>
</feature>
<feature type="sequence conflict" description="In Ref. 2; AAH44417." evidence="4" ref="2">
    <original>K</original>
    <variation>E</variation>
    <location>
        <position position="685"/>
    </location>
</feature>
<feature type="sequence conflict" description="In Ref. 2; AAH44417." evidence="4" ref="2">
    <original>F</original>
    <variation>L</variation>
    <location>
        <position position="835"/>
    </location>
</feature>
<feature type="sequence conflict" description="In Ref. 2; AAH44417." evidence="4" ref="2">
    <original>I</original>
    <variation>T</variation>
    <location>
        <position position="910"/>
    </location>
</feature>
<protein>
    <recommendedName>
        <fullName>Testis-expressed protein 10 homolog</fullName>
    </recommendedName>
</protein>
<accession>Q803M3</accession>
<accession>Q6PUR4</accession>
<keyword id="KW-0539">Nucleus</keyword>
<keyword id="KW-1185">Reference proteome</keyword>
<proteinExistence type="evidence at transcript level"/>
<sequence>MSKKRKRQDDFQKTKLKVGKKKPKADNATNVNFRSKSIHLPEQLKHGESGPTTHRHLDIKDLLSQLHHFNSNVKQGALVGLRELLSANPTMVELHASVVLSEVAALFTDKDGSVRAAAVRLLRFVAQCIPSERVAPFFPLLSAHLTCAMTHISEAIQEEALRVLDVLLEHYPGLLSQRHTVLLGNFLELISQRRKSGTGQDKSGKGSYALTVTTNRSVTAQQWRLTVLLRLSNFLQAVVEERPLEEGVSSRIGLGMWAVEKGLVTPVDVTWEEHVNGQGKIQLFENSGAGPTSHSAYRLRPDSKSGAGMDKELCSAETVQGFAATLVPLLLEIWVEAAGGGRVQTDSGHLLSAESMALMFQILSILQLLRRMTPQRDQQDVLDAWFRNSYLTDFKQHFMKNFPYGLLEVARHKKKADGKRIKQPVAAGVVAGSTVEPLAVNVTLCQVMVTLSLRGQDHVAAEDADWLGPIRVFIRETLSNGSKLSSKHLAALLEVVWRMIVTQRSRVVTDELLQAVYVQYQQRNLSVNVRSLLLRFFSQLYIQEHQNHPHIARSRILARWLASLPVQLVQLGSRNPQLSAQLLETVQPAAARGNKDLLQSLQKNACSLYDPQEGCVVVLPVESQKRLVQILHFLPEFPAELLACLSEVCNTGRVSASLATTLIRTVHLRSPLSGCSSASQDVPLKDVDYLSFFFTTLTGFSSDMLRALQDKDEDDLLAASTLSPLSVYTTSLDQFLHHWDVVEVVCHCLDTLGSRAQCFDVIQNAIINNLAGLVVVPDCVCVALLRCVPRLLDVNFLPSDTLLHFLSDCCLSMLSLLLQLEQSARKRDAVWEACFAALSSVPRLLRLVLQSFRVLDLCEDELPVLAQILSLLLQHTQLRNHMMANASFLQHIIQDLTHYYGGESREQWLIDLLYCYSVTLSTHRANMGIRDIY</sequence>
<name>TEX10_DANRE</name>
<gene>
    <name type="primary">tex10</name>
    <name type="ORF">zgc:55523</name>
</gene>
<organism>
    <name type="scientific">Danio rerio</name>
    <name type="common">Zebrafish</name>
    <name type="synonym">Brachydanio rerio</name>
    <dbReference type="NCBI Taxonomy" id="7955"/>
    <lineage>
        <taxon>Eukaryota</taxon>
        <taxon>Metazoa</taxon>
        <taxon>Chordata</taxon>
        <taxon>Craniata</taxon>
        <taxon>Vertebrata</taxon>
        <taxon>Euteleostomi</taxon>
        <taxon>Actinopterygii</taxon>
        <taxon>Neopterygii</taxon>
        <taxon>Teleostei</taxon>
        <taxon>Ostariophysi</taxon>
        <taxon>Cypriniformes</taxon>
        <taxon>Danionidae</taxon>
        <taxon>Danioninae</taxon>
        <taxon>Danio</taxon>
    </lineage>
</organism>
<evidence type="ECO:0000250" key="1">
    <source>
        <dbReference type="UniProtKB" id="Q3URQ0"/>
    </source>
</evidence>
<evidence type="ECO:0000250" key="2">
    <source>
        <dbReference type="UniProtKB" id="Q9NXF1"/>
    </source>
</evidence>
<evidence type="ECO:0000256" key="3">
    <source>
        <dbReference type="SAM" id="MobiDB-lite"/>
    </source>
</evidence>
<evidence type="ECO:0000305" key="4"/>
<comment type="function">
    <text evidence="2">Component of the PELP1 complex involved in the nucleolar steps of 28S rRNA maturation and the subsequent nucleoplasmic transit of the pre-60S ribosomal subunit.</text>
</comment>
<comment type="subunit">
    <text evidence="2">Component of some MLL1/MLL complex. Component of the PELP1 complex, composed of at least pelp1, tex10 and wdr18. The complex interacts with pre-60S ribosome particles.</text>
</comment>
<comment type="subcellular location">
    <subcellularLocation>
        <location evidence="1">Nucleus</location>
        <location evidence="1">Nucleoplasm</location>
    </subcellularLocation>
    <subcellularLocation>
        <location evidence="2">Nucleus</location>
        <location evidence="2">Nucleolus</location>
    </subcellularLocation>
</comment>
<comment type="similarity">
    <text evidence="4">Belongs to the IPI1/TEX10 family.</text>
</comment>
<reference key="1">
    <citation type="journal article" date="2004" name="Proc. Natl. Acad. Sci. U.S.A.">
        <title>Hematopoietic gene expression profile in zebrafish kidney marrow.</title>
        <authorList>
            <person name="Song H.-D."/>
            <person name="Sun X.-J."/>
            <person name="Deng M."/>
            <person name="Zhang G.-W."/>
            <person name="Zhou Y."/>
            <person name="Wu X.-Y."/>
            <person name="Sheng Y."/>
            <person name="Chen Y."/>
            <person name="Ruan Z."/>
            <person name="Jiang C.-L."/>
            <person name="Fan H.-Y."/>
            <person name="Zon L.I."/>
            <person name="Kanki J.P."/>
            <person name="Liu T.X."/>
            <person name="Look A.T."/>
            <person name="Chen Z."/>
        </authorList>
    </citation>
    <scope>NUCLEOTIDE SEQUENCE [LARGE SCALE MRNA]</scope>
    <source>
        <tissue>Kidney marrow</tissue>
    </source>
</reference>
<reference key="2">
    <citation type="submission" date="2003-01" db="EMBL/GenBank/DDBJ databases">
        <authorList>
            <consortium name="NIH - Zebrafish Gene Collection (ZGC) project"/>
        </authorList>
    </citation>
    <scope>NUCLEOTIDE SEQUENCE [LARGE SCALE MRNA]</scope>
    <source>
        <strain>AB</strain>
    </source>
</reference>
<dbReference type="EMBL" id="AY577001">
    <property type="protein sequence ID" value="AAS92639.1"/>
    <property type="molecule type" value="mRNA"/>
</dbReference>
<dbReference type="EMBL" id="BC044417">
    <property type="protein sequence ID" value="AAH44417.1"/>
    <property type="molecule type" value="mRNA"/>
</dbReference>
<dbReference type="RefSeq" id="NP_997870.1">
    <property type="nucleotide sequence ID" value="NM_212705.1"/>
</dbReference>
<dbReference type="SMR" id="Q803M3"/>
<dbReference type="FunCoup" id="Q803M3">
    <property type="interactions" value="1371"/>
</dbReference>
<dbReference type="STRING" id="7955.ENSDARP00000072745"/>
<dbReference type="PaxDb" id="7955-ENSDARP00000072745"/>
<dbReference type="GeneID" id="327196"/>
<dbReference type="KEGG" id="dre:327196"/>
<dbReference type="AGR" id="ZFIN:ZDB-GENE-040426-2827"/>
<dbReference type="CTD" id="54881"/>
<dbReference type="ZFIN" id="ZDB-GENE-040426-2827">
    <property type="gene designation" value="tex10"/>
</dbReference>
<dbReference type="eggNOG" id="KOG2149">
    <property type="taxonomic scope" value="Eukaryota"/>
</dbReference>
<dbReference type="InParanoid" id="Q803M3"/>
<dbReference type="OrthoDB" id="361362at2759"/>
<dbReference type="PhylomeDB" id="Q803M3"/>
<dbReference type="PRO" id="PR:Q803M3"/>
<dbReference type="Proteomes" id="UP000000437">
    <property type="component" value="Chromosome 16"/>
</dbReference>
<dbReference type="GO" id="GO:0071339">
    <property type="term" value="C:MLL1 complex"/>
    <property type="evidence" value="ECO:0000250"/>
    <property type="project" value="UniProtKB"/>
</dbReference>
<dbReference type="GO" id="GO:0005730">
    <property type="term" value="C:nucleolus"/>
    <property type="evidence" value="ECO:0007669"/>
    <property type="project" value="UniProtKB-SubCell"/>
</dbReference>
<dbReference type="GO" id="GO:0005634">
    <property type="term" value="C:nucleus"/>
    <property type="evidence" value="ECO:0000318"/>
    <property type="project" value="GO_Central"/>
</dbReference>
<dbReference type="FunFam" id="1.25.10.10:FF:000918">
    <property type="entry name" value="Testis-expressed protein 10 homolog"/>
    <property type="match status" value="1"/>
</dbReference>
<dbReference type="Gene3D" id="1.25.10.10">
    <property type="entry name" value="Leucine-rich Repeat Variant"/>
    <property type="match status" value="1"/>
</dbReference>
<dbReference type="InterPro" id="IPR011989">
    <property type="entry name" value="ARM-like"/>
</dbReference>
<dbReference type="InterPro" id="IPR016024">
    <property type="entry name" value="ARM-type_fold"/>
</dbReference>
<dbReference type="InterPro" id="IPR024679">
    <property type="entry name" value="Ipi1_N"/>
</dbReference>
<dbReference type="PANTHER" id="PTHR16056">
    <property type="entry name" value="REGULATOR OF MICROTUBULE DYNAMICS PROTEIN"/>
    <property type="match status" value="1"/>
</dbReference>
<dbReference type="PANTHER" id="PTHR16056:SF2">
    <property type="entry name" value="TESTIS-EXPRESSED PROTEIN 10"/>
    <property type="match status" value="1"/>
</dbReference>
<dbReference type="Pfam" id="PF12333">
    <property type="entry name" value="Ipi1_N"/>
    <property type="match status" value="1"/>
</dbReference>
<dbReference type="SUPFAM" id="SSF48371">
    <property type="entry name" value="ARM repeat"/>
    <property type="match status" value="1"/>
</dbReference>